<keyword id="KW-0106">Calcium</keyword>
<keyword id="KW-0176">Collagen</keyword>
<keyword id="KW-0903">Direct protein sequencing</keyword>
<keyword id="KW-0272">Extracellular matrix</keyword>
<keyword id="KW-0379">Hydroxylation</keyword>
<keyword id="KW-0597">Phosphoprotein</keyword>
<keyword id="KW-0677">Repeat</keyword>
<keyword id="KW-0964">Secreted</keyword>
<sequence length="957" mass="85142">GPMGPSGPRGIPGPPGAPGPQGFPGEPGASGPMGPRGPPGPPGKNGDDGEAGKPGRPGERGPSGPQGARGIPGTAGIPGMKGHRGFSGIDGAKGDAGPAGPKGAPGQMGPRGIPGERGRPGAPGPAGARGNDGATGAAGPPGPTGPAGPPGFPGAVGAKGEAGPQGARGSEGPQGVRGEPGPPGPAGAAGANGAPGIAGAPGFPGARGPSGPQGPSGPSGPKGNSGEPGAPGSKGDTGAKGEPGPTGIQGPPGPAGEEGKRGARGEPGPAGIPGPPGERGGPGSRGFPGADGVAGPKGPAGERGSPGPAGPKGSPGEAGRPGEAGIPGAKGITGSPGSPGPDGKTGPPGPAGQDGRPGPPGPPGARGQAGVMGFPGPKGAAGEPGKAGERGVPGPPGAVGPAGKDGEAGAQGPPGPAGPAGERGEQGPAGSPGFQGIPGPAGPPGEAGKPGEQGVPGDIGAPGPSGARGERGFPGERGVQGPPGPAGPRGANGAPGNDGAKGDAGAPGAPGSQGAPGIQGMPGERGAAGIPGPKGDRGDAGPKGADGSPGKDGVRGITGPIGPPGPAGAPGDKGEAGPSGPAGPTGARGAPGDRGEPGPPGPAGFAGPPGADGQPGAKGEPGDAGAKGTGPPGPIGNVGAPGPKGARGSAGPPGATGFPGAAGRVGPPGPSGNAGPPGPPGPVGKRGETGPAGRPGEVGPPGPPGPAGEKGAPGADGPAGAPGTPGPQGIAGQRGVVGIPGQRGERGFPGIPGPSGEPGKQGPSGTSGERGPPGPMGPPGIAGPPGESGREGAPGAEGSPGRDGSPGAKGDRGETGPAGPPGAPGAPGAPGPVGPAGKSGDRGETGPAGPAGPIGPVGARGAAGPQGPRGDKGETGEQGDRGIKGHRGFSGIQGPPGPPGSPGEQGPSGASGPAGPRGPPGSAGSPGKDGINGIPGPIGPPGPRPGPPGPPGPPGPP</sequence>
<proteinExistence type="evidence at protein level"/>
<protein>
    <recommendedName>
        <fullName evidence="5">Collagen alpha-1(I) chain</fullName>
    </recommendedName>
    <alternativeName>
        <fullName evidence="1">Alpha-1 type I collagen</fullName>
    </alternativeName>
</protein>
<dbReference type="GO" id="GO:0005581">
    <property type="term" value="C:collagen trimer"/>
    <property type="evidence" value="ECO:0007669"/>
    <property type="project" value="UniProtKB-KW"/>
</dbReference>
<dbReference type="GO" id="GO:0005576">
    <property type="term" value="C:extracellular region"/>
    <property type="evidence" value="ECO:0007669"/>
    <property type="project" value="UniProtKB-SubCell"/>
</dbReference>
<dbReference type="InterPro" id="IPR008160">
    <property type="entry name" value="Collagen"/>
</dbReference>
<dbReference type="InterPro" id="IPR050938">
    <property type="entry name" value="Collagen_Structural_Proteins"/>
</dbReference>
<dbReference type="PANTHER" id="PTHR37456:SF6">
    <property type="entry name" value="COLLAGEN ALPHA-1(XXIII) CHAIN-LIKE ISOFORM X2"/>
    <property type="match status" value="1"/>
</dbReference>
<dbReference type="PANTHER" id="PTHR37456">
    <property type="entry name" value="SI:CH211-266K2.1"/>
    <property type="match status" value="1"/>
</dbReference>
<dbReference type="Pfam" id="PF01391">
    <property type="entry name" value="Collagen"/>
    <property type="match status" value="10"/>
</dbReference>
<comment type="function">
    <text evidence="6">Type I collagen is a member of group I collagen (fibrillar forming collagen).</text>
</comment>
<comment type="subunit">
    <text evidence="6">Trimers of one alpha 2(I) and two alpha 1(I) chains.</text>
</comment>
<comment type="subcellular location">
    <subcellularLocation>
        <location>Secreted</location>
    </subcellularLocation>
    <subcellularLocation>
        <location>Secreted</location>
        <location>Extracellular space</location>
    </subcellularLocation>
    <subcellularLocation>
        <location evidence="6">Secreted</location>
        <location evidence="6">Extracellular space</location>
        <location evidence="6">Extracellular matrix</location>
    </subcellularLocation>
</comment>
<comment type="tissue specificity">
    <text evidence="6">Forms the fibrils of tendon, ligaments and bones. In bones, the fibrils are mineralized with calcium hydroxyapatite.</text>
</comment>
<comment type="PTM">
    <text evidence="6">Prolines at the third position of the tripeptide repeating unit (G-X-Y) are hydroxylated in some or all of the chains.</text>
</comment>
<comment type="similarity">
    <text evidence="6">Belongs to the fibrillar collagen family.</text>
</comment>
<organism evidence="5">
    <name type="scientific">Hippopotamus amphibius</name>
    <name type="common">Hippopotamus</name>
    <dbReference type="NCBI Taxonomy" id="9833"/>
    <lineage>
        <taxon>Eukaryota</taxon>
        <taxon>Metazoa</taxon>
        <taxon>Chordata</taxon>
        <taxon>Craniata</taxon>
        <taxon>Vertebrata</taxon>
        <taxon>Euteleostomi</taxon>
        <taxon>Mammalia</taxon>
        <taxon>Eutheria</taxon>
        <taxon>Laurasiatheria</taxon>
        <taxon>Artiodactyla</taxon>
        <taxon>Whippomorpha</taxon>
        <taxon>Ancodonta</taxon>
        <taxon>Hippopotamidae</taxon>
        <taxon>Hippopotamus</taxon>
    </lineage>
</organism>
<accession>C0HJN5</accession>
<name>CO1A1_HIPAM</name>
<evidence type="ECO:0000250" key="1">
    <source>
        <dbReference type="UniProtKB" id="P02452"/>
    </source>
</evidence>
<evidence type="ECO:0000250" key="2">
    <source>
        <dbReference type="UniProtKB" id="P02454"/>
    </source>
</evidence>
<evidence type="ECO:0000256" key="3">
    <source>
        <dbReference type="SAM" id="MobiDB-lite"/>
    </source>
</evidence>
<evidence type="ECO:0000269" key="4">
    <source>
    </source>
</evidence>
<evidence type="ECO:0000303" key="5">
    <source>
    </source>
</evidence>
<evidence type="ECO:0000305" key="6"/>
<reference evidence="6" key="1">
    <citation type="journal article" date="2015" name="Nature">
        <title>Ancient proteins resolve the evolutionary history of Darwin's South American ungulates.</title>
        <authorList>
            <person name="Welker F."/>
            <person name="Collins M.J."/>
            <person name="Thomas J.A."/>
            <person name="Wadsley M."/>
            <person name="Brace S."/>
            <person name="Cappellini E."/>
            <person name="Turvey S.T."/>
            <person name="Reguero M."/>
            <person name="Gelfo J.N."/>
            <person name="Kramarz A."/>
            <person name="Burger J."/>
            <person name="Thomas-Oates J."/>
            <person name="Ashford D.A."/>
            <person name="Ashton P.D."/>
            <person name="Rowsell K."/>
            <person name="Porter D.M."/>
            <person name="Kessler B."/>
            <person name="Fischer R."/>
            <person name="Baessmann C."/>
            <person name="Kaspar S."/>
            <person name="Olsen J.V."/>
            <person name="Kiley P."/>
            <person name="Elliott J.A."/>
            <person name="Kelstrup C.D."/>
            <person name="Mullin V."/>
            <person name="Hofreiter M."/>
            <person name="Willerslev E."/>
            <person name="Hublin J.J."/>
            <person name="Orlando L."/>
            <person name="Barnes I."/>
            <person name="MacPhee R.D."/>
        </authorList>
    </citation>
    <scope>PROTEIN SEQUENCE</scope>
    <scope>IDENTIFICATION BY MASS SPECTROMETRY</scope>
    <source>
        <tissue evidence="5">Bone</tissue>
    </source>
</reference>
<feature type="chain" id="PRO_0000433494" description="Collagen alpha-1(I) chain" evidence="4">
    <location>
        <begin position="1"/>
        <end position="957"/>
    </location>
</feature>
<feature type="region of interest" description="Disordered" evidence="3">
    <location>
        <begin position="1"/>
        <end position="957"/>
    </location>
</feature>
<feature type="compositionally biased region" description="Low complexity" evidence="3">
    <location>
        <begin position="23"/>
        <end position="33"/>
    </location>
</feature>
<feature type="compositionally biased region" description="Basic and acidic residues" evidence="3">
    <location>
        <begin position="45"/>
        <end position="59"/>
    </location>
</feature>
<feature type="compositionally biased region" description="Low complexity" evidence="3">
    <location>
        <begin position="95"/>
        <end position="113"/>
    </location>
</feature>
<feature type="compositionally biased region" description="Low complexity" evidence="3">
    <location>
        <begin position="125"/>
        <end position="138"/>
    </location>
</feature>
<feature type="compositionally biased region" description="Pro residues" evidence="3">
    <location>
        <begin position="140"/>
        <end position="152"/>
    </location>
</feature>
<feature type="compositionally biased region" description="Low complexity" evidence="3">
    <location>
        <begin position="186"/>
        <end position="210"/>
    </location>
</feature>
<feature type="compositionally biased region" description="Low complexity" evidence="3">
    <location>
        <begin position="219"/>
        <end position="228"/>
    </location>
</feature>
<feature type="compositionally biased region" description="Gly residues" evidence="3">
    <location>
        <begin position="277"/>
        <end position="286"/>
    </location>
</feature>
<feature type="compositionally biased region" description="Low complexity" evidence="3">
    <location>
        <begin position="330"/>
        <end position="356"/>
    </location>
</feature>
<feature type="compositionally biased region" description="Low complexity" evidence="3">
    <location>
        <begin position="365"/>
        <end position="384"/>
    </location>
</feature>
<feature type="compositionally biased region" description="Low complexity" evidence="3">
    <location>
        <begin position="426"/>
        <end position="453"/>
    </location>
</feature>
<feature type="compositionally biased region" description="Low complexity" evidence="3">
    <location>
        <begin position="488"/>
        <end position="516"/>
    </location>
</feature>
<feature type="compositionally biased region" description="Low complexity" evidence="3">
    <location>
        <begin position="576"/>
        <end position="590"/>
    </location>
</feature>
<feature type="compositionally biased region" description="Low complexity" evidence="3">
    <location>
        <begin position="603"/>
        <end position="618"/>
    </location>
</feature>
<feature type="compositionally biased region" description="Low complexity" evidence="3">
    <location>
        <begin position="649"/>
        <end position="665"/>
    </location>
</feature>
<feature type="compositionally biased region" description="Low complexity" evidence="3">
    <location>
        <begin position="707"/>
        <end position="731"/>
    </location>
</feature>
<feature type="compositionally biased region" description="Pro residues" evidence="3">
    <location>
        <begin position="772"/>
        <end position="782"/>
    </location>
</feature>
<feature type="compositionally biased region" description="Pro residues" evidence="3">
    <location>
        <begin position="818"/>
        <end position="833"/>
    </location>
</feature>
<feature type="compositionally biased region" description="Low complexity" evidence="3">
    <location>
        <begin position="854"/>
        <end position="868"/>
    </location>
</feature>
<feature type="compositionally biased region" description="Basic and acidic residues" evidence="3">
    <location>
        <begin position="869"/>
        <end position="883"/>
    </location>
</feature>
<feature type="compositionally biased region" description="Low complexity" evidence="3">
    <location>
        <begin position="902"/>
        <end position="935"/>
    </location>
</feature>
<feature type="compositionally biased region" description="Pro residues" evidence="3">
    <location>
        <begin position="937"/>
        <end position="957"/>
    </location>
</feature>
<feature type="modified residue" description="Phosphoserine" evidence="2">
    <location>
        <position position="87"/>
    </location>
</feature>
<feature type="modified residue" description="Phosphoserine" evidence="2">
    <location>
        <position position="579"/>
    </location>
</feature>
<feature type="unsure residue" description="I or L" evidence="4">
    <location>
        <position position="11"/>
    </location>
</feature>
<feature type="unsure residue" description="I or L" evidence="4">
    <location>
        <position position="71"/>
    </location>
</feature>
<feature type="unsure residue" description="I or L" evidence="4">
    <location>
        <position position="77"/>
    </location>
</feature>
<feature type="unsure residue" description="I or L" evidence="4">
    <location>
        <position position="89"/>
    </location>
</feature>
<feature type="unsure residue" description="I or L" evidence="4">
    <location>
        <position position="113"/>
    </location>
</feature>
<feature type="unsure residue" description="I or L" evidence="4">
    <location>
        <position position="197"/>
    </location>
</feature>
<feature type="unsure residue" description="I or L" evidence="4">
    <location>
        <position position="248"/>
    </location>
</feature>
<feature type="unsure residue" description="I or L" evidence="4">
    <location>
        <position position="272"/>
    </location>
</feature>
<feature type="unsure residue" description="I or L" evidence="4">
    <location>
        <position position="326"/>
    </location>
</feature>
<feature type="unsure residue" description="I or L" evidence="4">
    <location>
        <position position="332"/>
    </location>
</feature>
<feature type="unsure residue" description="I or L" evidence="4">
    <location>
        <position position="437"/>
    </location>
</feature>
<feature type="unsure residue" description="I or L" evidence="4">
    <location>
        <position position="459"/>
    </location>
</feature>
<feature type="unsure residue" description="I or L" evidence="4">
    <location>
        <position position="518"/>
    </location>
</feature>
<feature type="unsure residue" description="I or L" evidence="4">
    <location>
        <position position="530"/>
    </location>
</feature>
<feature type="unsure residue" description="I or L" evidence="4">
    <location>
        <position position="557"/>
    </location>
</feature>
<feature type="unsure residue" description="I or L" evidence="4">
    <location>
        <position position="561"/>
    </location>
</feature>
<feature type="unsure residue" description="I or L" evidence="4">
    <location>
        <position position="635"/>
    </location>
</feature>
<feature type="unsure residue" description="I or L" evidence="4">
    <location>
        <position position="730"/>
    </location>
</feature>
<feature type="unsure residue" description="I or L" evidence="4">
    <location>
        <position position="739"/>
    </location>
</feature>
<feature type="unsure residue" description="I or L" evidence="4">
    <location>
        <position position="751"/>
    </location>
</feature>
<feature type="unsure residue" description="I or L" evidence="4">
    <location>
        <position position="781"/>
    </location>
</feature>
<feature type="unsure residue" description="I or L" evidence="4">
    <location>
        <position position="854"/>
    </location>
</feature>
<feature type="unsure residue" description="I or L" evidence="4">
    <location>
        <position position="883"/>
    </location>
</feature>
<feature type="unsure residue" description="I or L" evidence="4">
    <location>
        <position position="892"/>
    </location>
</feature>
<feature type="unsure residue" description="I or L" evidence="4">
    <location>
        <position position="931"/>
    </location>
</feature>
<feature type="unsure residue" description="I or L" evidence="4">
    <location>
        <position position="934"/>
    </location>
</feature>
<feature type="unsure residue" description="I or L" evidence="4">
    <location>
        <position position="938"/>
    </location>
</feature>
<feature type="non-consecutive residues" evidence="5">
    <location>
        <begin position="23"/>
        <end position="24"/>
    </location>
</feature>
<feature type="non-consecutive residues" evidence="5">
    <location>
        <begin position="102"/>
        <end position="103"/>
    </location>
</feature>
<feature type="non-consecutive residues" evidence="5">
    <location>
        <begin position="189"/>
        <end position="190"/>
    </location>
</feature>
<feature type="non-consecutive residues" evidence="5">
    <location>
        <begin position="628"/>
        <end position="629"/>
    </location>
</feature>
<feature type="non-consecutive residues" evidence="5">
    <location>
        <begin position="685"/>
        <end position="686"/>
    </location>
</feature>
<feature type="non-consecutive residues" evidence="5">
    <location>
        <begin position="944"/>
        <end position="945"/>
    </location>
</feature>
<gene>
    <name evidence="1" type="primary">COL1A1</name>
</gene>